<gene>
    <name type="primary">ycf76-A</name>
</gene>
<gene>
    <name type="primary">ycf76-B</name>
</gene>
<keyword id="KW-0150">Chloroplast</keyword>
<keyword id="KW-0934">Plastid</keyword>
<keyword id="KW-1185">Reference proteome</keyword>
<feature type="chain" id="PRO_0000277364" description="Uncharacterized protein ycf76">
    <location>
        <begin position="1"/>
        <end position="85"/>
    </location>
</feature>
<organism>
    <name type="scientific">Zea mays</name>
    <name type="common">Maize</name>
    <dbReference type="NCBI Taxonomy" id="4577"/>
    <lineage>
        <taxon>Eukaryota</taxon>
        <taxon>Viridiplantae</taxon>
        <taxon>Streptophyta</taxon>
        <taxon>Embryophyta</taxon>
        <taxon>Tracheophyta</taxon>
        <taxon>Spermatophyta</taxon>
        <taxon>Magnoliopsida</taxon>
        <taxon>Liliopsida</taxon>
        <taxon>Poales</taxon>
        <taxon>Poaceae</taxon>
        <taxon>PACMAD clade</taxon>
        <taxon>Panicoideae</taxon>
        <taxon>Andropogonodae</taxon>
        <taxon>Andropogoneae</taxon>
        <taxon>Tripsacinae</taxon>
        <taxon>Zea</taxon>
    </lineage>
</organism>
<evidence type="ECO:0000305" key="1"/>
<protein>
    <recommendedName>
        <fullName>Uncharacterized protein ycf76</fullName>
    </recommendedName>
    <alternativeName>
        <fullName>ORF85</fullName>
    </alternativeName>
</protein>
<accession>Q36997</accession>
<dbReference type="EMBL" id="X86563">
    <property type="protein sequence ID" value="CAA60340.1"/>
    <property type="molecule type" value="Genomic_DNA"/>
</dbReference>
<dbReference type="EMBL" id="X86563">
    <property type="protein sequence ID" value="CAA60360.1"/>
    <property type="molecule type" value="Genomic_DNA"/>
</dbReference>
<dbReference type="PIR" id="S58627">
    <property type="entry name" value="S58627"/>
</dbReference>
<dbReference type="RefSeq" id="NP_043078.1">
    <property type="nucleotide sequence ID" value="NC_001666.2"/>
</dbReference>
<dbReference type="RefSeq" id="NP_043099.1">
    <property type="nucleotide sequence ID" value="NC_001666.2"/>
</dbReference>
<dbReference type="FunCoup" id="Q36997">
    <property type="interactions" value="3"/>
</dbReference>
<dbReference type="STRING" id="4577.Q36997"/>
<dbReference type="KEGG" id="zma:1466375"/>
<dbReference type="KEGG" id="zma:1466382"/>
<dbReference type="InParanoid" id="Q36997"/>
<dbReference type="OrthoDB" id="587411at2759"/>
<dbReference type="Proteomes" id="UP000007305">
    <property type="component" value="Chloroplast"/>
</dbReference>
<dbReference type="GO" id="GO:0009507">
    <property type="term" value="C:chloroplast"/>
    <property type="evidence" value="ECO:0007669"/>
    <property type="project" value="UniProtKB-SubCell"/>
</dbReference>
<comment type="subcellular location">
    <subcellularLocation>
        <location>Plastid</location>
        <location>Chloroplast</location>
    </subcellularLocation>
</comment>
<comment type="similarity">
    <text evidence="1">Belongs to the ycf76 family.</text>
</comment>
<geneLocation type="chloroplast"/>
<proteinExistence type="inferred from homology"/>
<reference key="1">
    <citation type="journal article" date="1995" name="J. Mol. Biol.">
        <title>Complete sequence of the maize chloroplast genome: gene content, hotspots of divergence and fine tuning of genetic information by transcript editing.</title>
        <authorList>
            <person name="Maier R.M."/>
            <person name="Neckermann K."/>
            <person name="Igloi G.L."/>
            <person name="Koessel H."/>
        </authorList>
    </citation>
    <scope>NUCLEOTIDE SEQUENCE [LARGE SCALE GENOMIC DNA]</scope>
    <source>
        <strain>cv. B73</strain>
    </source>
</reference>
<sequence length="85" mass="9790">MKKILFSMFYSILVGEEPDSVFLKKEGKQNQVKMIWIAPSSCAKDLTISEGTGATFPFHFHSRVSICFHALFLRPRNMKWTNSFS</sequence>
<name>YCF76_MAIZE</name>